<evidence type="ECO:0000250" key="1">
    <source>
        <dbReference type="UniProtKB" id="P00420"/>
    </source>
</evidence>
<evidence type="ECO:0000255" key="2"/>
<evidence type="ECO:0000305" key="3"/>
<comment type="function">
    <text evidence="1">Component of the cytochrome c oxidase, the last enzyme in the mitochondrial electron transport chain which drives oxidative phosphorylation. The respiratory chain contains 3 multisubunit complexes succinate dehydrogenase (complex II, CII), ubiquinol-cytochrome c oxidoreductase (cytochrome b-c1 complex, complex III, CIII) and cytochrome c oxidase (complex IV, CIV), that cooperate to transfer electrons derived from NADH and succinate to molecular oxygen, creating an electrochemical gradient over the inner membrane that drives transmembrane transport and the ATP synthase. Cytochrome c oxidase is the component of the respiratory chain that catalyzes the reduction of oxygen to water. Electrons originating from reduced cytochrome c in the intermembrane space (IMS) are transferred via the dinuclear copper A center (CU(A)) of subunit 2 and heme A of subunit 1 to the active site in subunit 1, a binuclear center (BNC) formed by heme A3 and copper B (CU(B)). The BNC reduces molecular oxygen to 2 water molecules using 4 electrons from cytochrome c in the IMS and 4 protons from the mitochondrial matrix.</text>
</comment>
<comment type="catalytic activity">
    <reaction evidence="1">
        <text>4 Fe(II)-[cytochrome c] + O2 + 8 H(+)(in) = 4 Fe(III)-[cytochrome c] + 2 H2O + 4 H(+)(out)</text>
        <dbReference type="Rhea" id="RHEA:11436"/>
        <dbReference type="Rhea" id="RHEA-COMP:10350"/>
        <dbReference type="Rhea" id="RHEA-COMP:14399"/>
        <dbReference type="ChEBI" id="CHEBI:15377"/>
        <dbReference type="ChEBI" id="CHEBI:15378"/>
        <dbReference type="ChEBI" id="CHEBI:15379"/>
        <dbReference type="ChEBI" id="CHEBI:29033"/>
        <dbReference type="ChEBI" id="CHEBI:29034"/>
        <dbReference type="EC" id="7.1.1.9"/>
    </reaction>
    <physiologicalReaction direction="left-to-right" evidence="1">
        <dbReference type="Rhea" id="RHEA:11437"/>
    </physiologicalReaction>
</comment>
<comment type="subunit">
    <text evidence="1">Component of the cytochrome c oxidase (complex IV, CIV), a multisubunit enzyme composed of a catalytic core of 3 subunits and several supernumerary subunits. The complex exists as a monomer or a dimer and forms supercomplexes (SCs) in the inner mitochondrial membrane with ubiquinol-cytochrome c oxidoreductase (cytochrome b-c1 complex, complex III, CIII).</text>
</comment>
<comment type="subcellular location">
    <subcellularLocation>
        <location evidence="1">Mitochondrion inner membrane</location>
        <topology evidence="1">Multi-pass membrane protein</topology>
    </subcellularLocation>
</comment>
<comment type="similarity">
    <text evidence="3">Belongs to the cytochrome c oxidase subunit 3 family.</text>
</comment>
<reference key="1">
    <citation type="journal article" date="1995" name="J. Mol. Evol.">
        <title>Molecular phylogeny of Allomyces macrogynus: congruency between nuclear ribosomal RNA- and mitochondrial protein-based trees.</title>
        <authorList>
            <person name="Paquin B."/>
            <person name="Forget L."/>
            <person name="Roewer I."/>
            <person name="Lang B.F."/>
        </authorList>
    </citation>
    <scope>NUCLEOTIDE SEQUENCE [GENOMIC DNA]</scope>
    <source>
        <strain>ATCC 46923 / Burma 3-35 (35OC)</strain>
    </source>
</reference>
<reference key="2">
    <citation type="journal article" date="1996" name="J. Mol. Biol.">
        <title>The mitochondrial DNA of Allomyces macrogynus: the complete genomic sequence from an ancestral fungus.</title>
        <authorList>
            <person name="Paquin B."/>
            <person name="Lang B.F."/>
        </authorList>
    </citation>
    <scope>NUCLEOTIDE SEQUENCE [GENOMIC DNA]</scope>
    <source>
        <strain>ATCC 46923 / Burma 3-35 (35OC)</strain>
    </source>
</reference>
<keyword id="KW-0472">Membrane</keyword>
<keyword id="KW-0496">Mitochondrion</keyword>
<keyword id="KW-0999">Mitochondrion inner membrane</keyword>
<keyword id="KW-1278">Translocase</keyword>
<keyword id="KW-0812">Transmembrane</keyword>
<keyword id="KW-1133">Transmembrane helix</keyword>
<organism>
    <name type="scientific">Allomyces macrogynus</name>
    <dbReference type="NCBI Taxonomy" id="28583"/>
    <lineage>
        <taxon>Eukaryota</taxon>
        <taxon>Fungi</taxon>
        <taxon>Fungi incertae sedis</taxon>
        <taxon>Blastocladiomycota</taxon>
        <taxon>Blastocladiomycetes</taxon>
        <taxon>Blastocladiales</taxon>
        <taxon>Blastocladiaceae</taxon>
        <taxon>Allomyces</taxon>
    </lineage>
</organism>
<gene>
    <name type="primary">COX3</name>
</gene>
<feature type="chain" id="PRO_0000183730" description="Cytochrome c oxidase subunit 3">
    <location>
        <begin position="1"/>
        <end position="274"/>
    </location>
</feature>
<feature type="transmembrane region" description="Helical" evidence="2">
    <location>
        <begin position="22"/>
        <end position="42"/>
    </location>
</feature>
<feature type="transmembrane region" description="Helical" evidence="2">
    <location>
        <begin position="47"/>
        <end position="67"/>
    </location>
</feature>
<feature type="transmembrane region" description="Helical" evidence="2">
    <location>
        <begin position="93"/>
        <end position="113"/>
    </location>
</feature>
<feature type="transmembrane region" description="Helical" evidence="2">
    <location>
        <begin position="137"/>
        <end position="157"/>
    </location>
</feature>
<feature type="transmembrane region" description="Helical" evidence="2">
    <location>
        <begin position="170"/>
        <end position="190"/>
    </location>
</feature>
<feature type="transmembrane region" description="Helical" evidence="2">
    <location>
        <begin position="208"/>
        <end position="228"/>
    </location>
</feature>
<feature type="transmembrane region" description="Helical" evidence="2">
    <location>
        <begin position="248"/>
        <end position="268"/>
    </location>
</feature>
<protein>
    <recommendedName>
        <fullName>Cytochrome c oxidase subunit 3</fullName>
        <ecNumber>7.1.1.9</ecNumber>
    </recommendedName>
    <alternativeName>
        <fullName>Cytochrome c oxidase polypeptide III</fullName>
    </alternativeName>
</protein>
<dbReference type="EC" id="7.1.1.9"/>
<dbReference type="EMBL" id="U41288">
    <property type="protein sequence ID" value="AAC49226.1"/>
    <property type="molecule type" value="Genomic_DNA"/>
</dbReference>
<dbReference type="PIR" id="S63643">
    <property type="entry name" value="S63643"/>
</dbReference>
<dbReference type="RefSeq" id="NP_043725.1">
    <property type="nucleotide sequence ID" value="NC_001715.1"/>
</dbReference>
<dbReference type="SMR" id="P80439"/>
<dbReference type="GeneID" id="801893"/>
<dbReference type="VEuPathDB" id="FungiDB:AlmafMp06"/>
<dbReference type="GO" id="GO:0005743">
    <property type="term" value="C:mitochondrial inner membrane"/>
    <property type="evidence" value="ECO:0007669"/>
    <property type="project" value="UniProtKB-SubCell"/>
</dbReference>
<dbReference type="GO" id="GO:0004129">
    <property type="term" value="F:cytochrome-c oxidase activity"/>
    <property type="evidence" value="ECO:0007669"/>
    <property type="project" value="UniProtKB-EC"/>
</dbReference>
<dbReference type="GO" id="GO:0006123">
    <property type="term" value="P:mitochondrial electron transport, cytochrome c to oxygen"/>
    <property type="evidence" value="ECO:0007669"/>
    <property type="project" value="TreeGrafter"/>
</dbReference>
<dbReference type="CDD" id="cd01665">
    <property type="entry name" value="Cyt_c_Oxidase_III"/>
    <property type="match status" value="1"/>
</dbReference>
<dbReference type="FunFam" id="1.10.287.70:FF:000082">
    <property type="entry name" value="Cytochrome c oxidase subunit 3"/>
    <property type="match status" value="1"/>
</dbReference>
<dbReference type="FunFam" id="1.20.120.80:FF:000002">
    <property type="entry name" value="Cytochrome c oxidase subunit 3"/>
    <property type="match status" value="1"/>
</dbReference>
<dbReference type="Gene3D" id="1.10.287.70">
    <property type="match status" value="1"/>
</dbReference>
<dbReference type="Gene3D" id="1.20.120.80">
    <property type="entry name" value="Cytochrome c oxidase, subunit III, four-helix bundle"/>
    <property type="match status" value="1"/>
</dbReference>
<dbReference type="InterPro" id="IPR024791">
    <property type="entry name" value="Cyt_c/ubiquinol_Oxase_su3"/>
</dbReference>
<dbReference type="InterPro" id="IPR033945">
    <property type="entry name" value="Cyt_c_oxase_su3_dom"/>
</dbReference>
<dbReference type="InterPro" id="IPR000298">
    <property type="entry name" value="Cyt_c_oxidase-like_su3"/>
</dbReference>
<dbReference type="InterPro" id="IPR035973">
    <property type="entry name" value="Cyt_c_oxidase_su3-like_sf"/>
</dbReference>
<dbReference type="InterPro" id="IPR013833">
    <property type="entry name" value="Cyt_c_oxidase_su3_a-hlx"/>
</dbReference>
<dbReference type="PANTHER" id="PTHR11403:SF7">
    <property type="entry name" value="CYTOCHROME C OXIDASE SUBUNIT 3"/>
    <property type="match status" value="1"/>
</dbReference>
<dbReference type="PANTHER" id="PTHR11403">
    <property type="entry name" value="CYTOCHROME C OXIDASE SUBUNIT III"/>
    <property type="match status" value="1"/>
</dbReference>
<dbReference type="Pfam" id="PF00510">
    <property type="entry name" value="COX3"/>
    <property type="match status" value="1"/>
</dbReference>
<dbReference type="SUPFAM" id="SSF81452">
    <property type="entry name" value="Cytochrome c oxidase subunit III-like"/>
    <property type="match status" value="1"/>
</dbReference>
<dbReference type="PROSITE" id="PS50253">
    <property type="entry name" value="COX3"/>
    <property type="match status" value="1"/>
</dbReference>
<geneLocation type="mitochondrion"/>
<proteinExistence type="inferred from homology"/>
<sequence>MTKKLINQFKSFQVHPYHLVEPSPWPLGASVACLILTLGGVMKFHGFAAGDIGLPLGLILVLASMLLWWRDVIREATYQGHHTKTVKYGITLGVVLFIVSEILLFFSLFWAFFHSSLAPSVELGSTWPPVGIEPLNPFEVPLLNTIILLTSGCTITVSHAKIISGDRGATILYLILTILLAWMFLGLQWVEYVNAPFTIADSVYGSTFFVATGFHGLHVMIGTIFLTVSLNRILSYHLTSGHHLGYEAAIWYWHVVDVIWLFLYVSVYYWGSNV</sequence>
<accession>P80439</accession>
<name>COX3_ALLMA</name>